<keyword id="KW-0175">Coiled coil</keyword>
<keyword id="KW-0256">Endoplasmic reticulum</keyword>
<keyword id="KW-0325">Glycoprotein</keyword>
<keyword id="KW-0472">Membrane</keyword>
<keyword id="KW-1185">Reference proteome</keyword>
<keyword id="KW-0735">Signal-anchor</keyword>
<keyword id="KW-0812">Transmembrane</keyword>
<keyword id="KW-1133">Transmembrane helix</keyword>
<proteinExistence type="evidence at protein level"/>
<feature type="chain" id="PRO_0000083865" description="Glucose-signaling factor 2">
    <location>
        <begin position="1"/>
        <end position="403"/>
    </location>
</feature>
<feature type="topological domain" description="Lumenal" evidence="1">
    <location>
        <begin position="1"/>
        <end position="177"/>
    </location>
</feature>
<feature type="transmembrane region" description="Helical; Signal-anchor for type II membrane protein" evidence="1">
    <location>
        <begin position="178"/>
        <end position="198"/>
    </location>
</feature>
<feature type="topological domain" description="Cytoplasmic" evidence="1">
    <location>
        <begin position="199"/>
        <end position="403"/>
    </location>
</feature>
<feature type="coiled-coil region" evidence="1">
    <location>
        <begin position="330"/>
        <end position="388"/>
    </location>
</feature>
<feature type="glycosylation site" description="N-linked (GlcNAc...) asparagine" evidence="1">
    <location>
        <position position="89"/>
    </location>
</feature>
<feature type="glycosylation site" description="N-linked (GlcNAc...) asparagine" evidence="1">
    <location>
        <position position="173"/>
    </location>
</feature>
<dbReference type="EMBL" id="Z47816">
    <property type="protein sequence ID" value="CAA87826.1"/>
    <property type="molecule type" value="Genomic_DNA"/>
</dbReference>
<dbReference type="EMBL" id="AY692925">
    <property type="protein sequence ID" value="AAT92944.1"/>
    <property type="molecule type" value="Genomic_DNA"/>
</dbReference>
<dbReference type="EMBL" id="BK006946">
    <property type="protein sequence ID" value="DAA09851.1"/>
    <property type="molecule type" value="Genomic_DNA"/>
</dbReference>
<dbReference type="PIR" id="S50944">
    <property type="entry name" value="S50944"/>
</dbReference>
<dbReference type="RefSeq" id="NP_013664.1">
    <property type="nucleotide sequence ID" value="NM_001182405.1"/>
</dbReference>
<dbReference type="BioGRID" id="35120">
    <property type="interactions" value="351"/>
</dbReference>
<dbReference type="DIP" id="DIP-4541N"/>
<dbReference type="FunCoup" id="Q04697">
    <property type="interactions" value="180"/>
</dbReference>
<dbReference type="IntAct" id="Q04697">
    <property type="interactions" value="39"/>
</dbReference>
<dbReference type="MINT" id="Q04697"/>
<dbReference type="STRING" id="4932.YML048W"/>
<dbReference type="GlyCosmos" id="Q04697">
    <property type="glycosylation" value="2 sites, No reported glycans"/>
</dbReference>
<dbReference type="GlyGen" id="Q04697">
    <property type="glycosylation" value="3 sites"/>
</dbReference>
<dbReference type="iPTMnet" id="Q04697"/>
<dbReference type="PaxDb" id="4932-YML048W"/>
<dbReference type="PeptideAtlas" id="Q04697"/>
<dbReference type="EnsemblFungi" id="YML048W_mRNA">
    <property type="protein sequence ID" value="YML048W"/>
    <property type="gene ID" value="YML048W"/>
</dbReference>
<dbReference type="GeneID" id="854957"/>
<dbReference type="KEGG" id="sce:YML048W"/>
<dbReference type="AGR" id="SGD:S000004511"/>
<dbReference type="SGD" id="S000004511">
    <property type="gene designation" value="GSF2"/>
</dbReference>
<dbReference type="VEuPathDB" id="FungiDB:YML048W"/>
<dbReference type="eggNOG" id="ENOG502QT03">
    <property type="taxonomic scope" value="Eukaryota"/>
</dbReference>
<dbReference type="HOGENOM" id="CLU_719597_0_0_1"/>
<dbReference type="InParanoid" id="Q04697"/>
<dbReference type="OMA" id="IMLAWLY"/>
<dbReference type="OrthoDB" id="4076669at2759"/>
<dbReference type="BioCyc" id="YEAST:G3O-32645-MONOMER"/>
<dbReference type="BioGRID-ORCS" id="854957">
    <property type="hits" value="3 hits in 10 CRISPR screens"/>
</dbReference>
<dbReference type="PRO" id="PR:Q04697"/>
<dbReference type="Proteomes" id="UP000002311">
    <property type="component" value="Chromosome XIII"/>
</dbReference>
<dbReference type="RNAct" id="Q04697">
    <property type="molecule type" value="protein"/>
</dbReference>
<dbReference type="GO" id="GO:0005737">
    <property type="term" value="C:cytoplasm"/>
    <property type="evidence" value="ECO:0007005"/>
    <property type="project" value="SGD"/>
</dbReference>
<dbReference type="GO" id="GO:0005783">
    <property type="term" value="C:endoplasmic reticulum"/>
    <property type="evidence" value="ECO:0007005"/>
    <property type="project" value="SGD"/>
</dbReference>
<dbReference type="GO" id="GO:0005789">
    <property type="term" value="C:endoplasmic reticulum membrane"/>
    <property type="evidence" value="ECO:0000314"/>
    <property type="project" value="SGD"/>
</dbReference>
<dbReference type="GO" id="GO:0005741">
    <property type="term" value="C:mitochondrial outer membrane"/>
    <property type="evidence" value="ECO:0007005"/>
    <property type="project" value="SGD"/>
</dbReference>
<dbReference type="GO" id="GO:0051082">
    <property type="term" value="F:unfolded protein binding"/>
    <property type="evidence" value="ECO:0000315"/>
    <property type="project" value="SGD"/>
</dbReference>
<dbReference type="GO" id="GO:0006457">
    <property type="term" value="P:protein folding"/>
    <property type="evidence" value="ECO:0000315"/>
    <property type="project" value="SGD"/>
</dbReference>
<dbReference type="GO" id="GO:0034394">
    <property type="term" value="P:protein localization to cell surface"/>
    <property type="evidence" value="ECO:0000315"/>
    <property type="project" value="SGD"/>
</dbReference>
<dbReference type="InterPro" id="IPR022757">
    <property type="entry name" value="Gsf2"/>
</dbReference>
<dbReference type="Pfam" id="PF11055">
    <property type="entry name" value="Gsf2"/>
    <property type="match status" value="1"/>
</dbReference>
<protein>
    <recommendedName>
        <fullName>Glucose-signaling factor 2</fullName>
    </recommendedName>
    <alternativeName>
        <fullName>Extracellular mutant protein 6</fullName>
    </alternativeName>
</protein>
<comment type="function">
    <text evidence="2 4">May be involved in the secretion of hexose transporters from the endoplasmic reticulum. Involved in secretion of GAL2 and HXT1.</text>
</comment>
<comment type="subcellular location">
    <subcellularLocation>
        <location evidence="5">Endoplasmic reticulum membrane</location>
        <topology evidence="5">Single-pass type II membrane protein</topology>
    </subcellularLocation>
</comment>
<comment type="miscellaneous">
    <text evidence="3">Present with 21400 molecules/cell in log phase SD medium.</text>
</comment>
<organism>
    <name type="scientific">Saccharomyces cerevisiae (strain ATCC 204508 / S288c)</name>
    <name type="common">Baker's yeast</name>
    <dbReference type="NCBI Taxonomy" id="559292"/>
    <lineage>
        <taxon>Eukaryota</taxon>
        <taxon>Fungi</taxon>
        <taxon>Dikarya</taxon>
        <taxon>Ascomycota</taxon>
        <taxon>Saccharomycotina</taxon>
        <taxon>Saccharomycetes</taxon>
        <taxon>Saccharomycetales</taxon>
        <taxon>Saccharomycetaceae</taxon>
        <taxon>Saccharomyces</taxon>
    </lineage>
</organism>
<sequence length="403" mass="45870">MEIYIRLNADVEHDYAFQVSNEDTINNKIKKIFPSKTGLADLMVLRPSIFHEKEPVKFYKSIHPGYLSEGGCLMFHYEADNEENLEELNDSKPLIDQLWPGQLVVPEWKLSKKNIWVYTIIMLAWLYTDLPDAISPTPGICLTNQLSRLLIPVAKHMDLPEIAAKLEQEVQANYSSLVAQWLFFVMHIFKVGIITLFLKLGIANPISFNPYKLWSLRDLTSPSANGAKNSGGNNNTTDLKTRLRSLGWIGAKRATYDDYQTNYYNYVIDKMGGAVAAYRAGAIRKAAAPGIQLVAGEGFQSPLEDRFTASTFTAIKTERKFILSEEYFVELENNLKKILEEYDGDIGKMNAEIRRFRRFGIYEPDEKLASLVKLRREIADEKEKASNNDATFGIKKNDLKKSN</sequence>
<name>GSF2_YEAST</name>
<accession>Q04697</accession>
<accession>D6VZC7</accession>
<reference key="1">
    <citation type="journal article" date="1997" name="Nature">
        <title>The nucleotide sequence of Saccharomyces cerevisiae chromosome XIII.</title>
        <authorList>
            <person name="Bowman S."/>
            <person name="Churcher C.M."/>
            <person name="Badcock K."/>
            <person name="Brown D."/>
            <person name="Chillingworth T."/>
            <person name="Connor R."/>
            <person name="Dedman K."/>
            <person name="Devlin K."/>
            <person name="Gentles S."/>
            <person name="Hamlin N."/>
            <person name="Hunt S."/>
            <person name="Jagels K."/>
            <person name="Lye G."/>
            <person name="Moule S."/>
            <person name="Odell C."/>
            <person name="Pearson D."/>
            <person name="Rajandream M.A."/>
            <person name="Rice P."/>
            <person name="Skelton J."/>
            <person name="Walsh S.V."/>
            <person name="Whitehead S."/>
            <person name="Barrell B.G."/>
        </authorList>
    </citation>
    <scope>NUCLEOTIDE SEQUENCE [LARGE SCALE GENOMIC DNA]</scope>
    <source>
        <strain>ATCC 204508 / S288c</strain>
    </source>
</reference>
<reference key="2">
    <citation type="journal article" date="2014" name="G3 (Bethesda)">
        <title>The reference genome sequence of Saccharomyces cerevisiae: Then and now.</title>
        <authorList>
            <person name="Engel S.R."/>
            <person name="Dietrich F.S."/>
            <person name="Fisk D.G."/>
            <person name="Binkley G."/>
            <person name="Balakrishnan R."/>
            <person name="Costanzo M.C."/>
            <person name="Dwight S.S."/>
            <person name="Hitz B.C."/>
            <person name="Karra K."/>
            <person name="Nash R.S."/>
            <person name="Weng S."/>
            <person name="Wong E.D."/>
            <person name="Lloyd P."/>
            <person name="Skrzypek M.S."/>
            <person name="Miyasato S.R."/>
            <person name="Simison M."/>
            <person name="Cherry J.M."/>
        </authorList>
    </citation>
    <scope>GENOME REANNOTATION</scope>
    <source>
        <strain>ATCC 204508 / S288c</strain>
    </source>
</reference>
<reference key="3">
    <citation type="journal article" date="2007" name="Genome Res.">
        <title>Approaching a complete repository of sequence-verified protein-encoding clones for Saccharomyces cerevisiae.</title>
        <authorList>
            <person name="Hu Y."/>
            <person name="Rolfs A."/>
            <person name="Bhullar B."/>
            <person name="Murthy T.V.S."/>
            <person name="Zhu C."/>
            <person name="Berger M.F."/>
            <person name="Camargo A.A."/>
            <person name="Kelley F."/>
            <person name="McCarron S."/>
            <person name="Jepson D."/>
            <person name="Richardson A."/>
            <person name="Raphael J."/>
            <person name="Moreira D."/>
            <person name="Taycher E."/>
            <person name="Zuo D."/>
            <person name="Mohr S."/>
            <person name="Kane M.F."/>
            <person name="Williamson J."/>
            <person name="Simpson A.J.G."/>
            <person name="Bulyk M.L."/>
            <person name="Harlow E."/>
            <person name="Marsischky G."/>
            <person name="Kolodner R.D."/>
            <person name="LaBaer J."/>
        </authorList>
    </citation>
    <scope>NUCLEOTIDE SEQUENCE [GENOMIC DNA]</scope>
    <source>
        <strain>ATCC 204508 / S288c</strain>
    </source>
</reference>
<reference key="4">
    <citation type="journal article" date="1997" name="Genetics">
        <title>Large scale identification of genes involved in cell surface biosynthesis and architecture in Saccharomyces cerevisiae.</title>
        <authorList>
            <person name="Lussier M."/>
            <person name="White A.-M."/>
            <person name="Sheraton J."/>
            <person name="di Paolo T."/>
            <person name="Treadwell J."/>
            <person name="Southard S.B."/>
            <person name="Horenstein C.I."/>
            <person name="Chen-Weiner J."/>
            <person name="Ram A.F.J."/>
            <person name="Kapteyn J.C."/>
            <person name="Roemer T.W."/>
            <person name="Vo D.H."/>
            <person name="Bondoc D.C."/>
            <person name="Hall J."/>
            <person name="Zhong W.-W."/>
            <person name="Sdicu A.-M."/>
            <person name="Davies J."/>
            <person name="Klis F.M."/>
            <person name="Robbins P.W."/>
            <person name="Bussey H."/>
        </authorList>
    </citation>
    <scope>IDENTIFICATION</scope>
</reference>
<reference key="5">
    <citation type="journal article" date="1997" name="Genetics">
        <title>Mutations in GSF1 and GSF2 alter glucose signaling in Saccharomyces cerevisiae.</title>
        <authorList>
            <person name="Sherwood P.W."/>
            <person name="Carlson M."/>
        </authorList>
    </citation>
    <scope>FUNCTION</scope>
</reference>
<reference key="6">
    <citation type="journal article" date="1999" name="Proc. Natl. Acad. Sci. U.S.A.">
        <title>Efficient export of the glucose transporter Hxt1p from the endoplasmic reticulum requires Gsf2p.</title>
        <authorList>
            <person name="Sherwood P.W."/>
            <person name="Carlson M."/>
        </authorList>
    </citation>
    <scope>FUNCTION</scope>
    <scope>SUBCELLULAR LOCATION</scope>
</reference>
<reference key="7">
    <citation type="journal article" date="2003" name="Nature">
        <title>Global analysis of protein localization in budding yeast.</title>
        <authorList>
            <person name="Huh W.-K."/>
            <person name="Falvo J.V."/>
            <person name="Gerke L.C."/>
            <person name="Carroll A.S."/>
            <person name="Howson R.W."/>
            <person name="Weissman J.S."/>
            <person name="O'Shea E.K."/>
        </authorList>
    </citation>
    <scope>SUBCELLULAR LOCATION [LARGE SCALE ANALYSIS]</scope>
</reference>
<reference key="8">
    <citation type="journal article" date="2003" name="Nature">
        <title>Global analysis of protein expression in yeast.</title>
        <authorList>
            <person name="Ghaemmaghami S."/>
            <person name="Huh W.-K."/>
            <person name="Bower K."/>
            <person name="Howson R.W."/>
            <person name="Belle A."/>
            <person name="Dephoure N."/>
            <person name="O'Shea E.K."/>
            <person name="Weissman J.S."/>
        </authorList>
    </citation>
    <scope>LEVEL OF PROTEIN EXPRESSION [LARGE SCALE ANALYSIS]</scope>
</reference>
<gene>
    <name type="primary">GSF2</name>
    <name type="synonym">ECM6</name>
    <name type="synonym">EFF2</name>
    <name type="ordered locus">YML048W</name>
    <name type="ORF">YM9827.04</name>
</gene>
<evidence type="ECO:0000255" key="1"/>
<evidence type="ECO:0000269" key="2">
    <source>
    </source>
</evidence>
<evidence type="ECO:0000269" key="3">
    <source>
    </source>
</evidence>
<evidence type="ECO:0000269" key="4">
    <source>
    </source>
</evidence>
<evidence type="ECO:0000305" key="5"/>